<protein>
    <recommendedName>
        <fullName evidence="1">Argininosuccinate lyase</fullName>
        <shortName evidence="1">ASAL</shortName>
        <ecNumber evidence="1">4.3.2.1</ecNumber>
    </recommendedName>
    <alternativeName>
        <fullName evidence="1">Arginosuccinase</fullName>
    </alternativeName>
</protein>
<name>ARLY_BARBK</name>
<comment type="catalytic activity">
    <reaction evidence="1">
        <text>2-(N(omega)-L-arginino)succinate = fumarate + L-arginine</text>
        <dbReference type="Rhea" id="RHEA:24020"/>
        <dbReference type="ChEBI" id="CHEBI:29806"/>
        <dbReference type="ChEBI" id="CHEBI:32682"/>
        <dbReference type="ChEBI" id="CHEBI:57472"/>
        <dbReference type="EC" id="4.3.2.1"/>
    </reaction>
</comment>
<comment type="pathway">
    <text evidence="1">Amino-acid biosynthesis; L-arginine biosynthesis; L-arginine from L-ornithine and carbamoyl phosphate: step 3/3.</text>
</comment>
<comment type="subcellular location">
    <subcellularLocation>
        <location evidence="1">Cytoplasm</location>
    </subcellularLocation>
</comment>
<comment type="similarity">
    <text evidence="1">Belongs to the lyase 1 family. Argininosuccinate lyase subfamily.</text>
</comment>
<accession>A1UQY9</accession>
<sequence>MTGDKLSNQMWGGRFAAGPAAIMEEINASIDFDQKLYRQDIEGSLSHAAMLAQTKIISHSDYEKIVHGLQLIRQEIETGSFTFSRKLEDIHMNIEARLSELIGPVAGRLHTARSRNDQVAVDFRLWVREAAQKIAQALKDLMEQLLMRAEQHADTLMPGFTHLQTAQPVTFGHYMMAYVEMFGRDLSRMRDAIERMNESPLGAAALAGTGFPIDRFMTAQALGFREPTRNSIDSVSDRDFALEFLSAGALCAMHLSRLAEEIILWSSAQFHFIRLSDAFSTGSSIMPQKRNPDAAELVRAKAGRLNAALMGLLTVMKGLPLAYSKDMQEDKEYVFDGVLNLELSLAAMMGIISDLEVNKEAMKQAAGSGYAIATDLADWCVRELGLPFREAHHITGRAVALAEQKKCSLDELSLDEFQTLHPDINAAVFDVLTIEKSVESRNSFGGTAPSEVLRQVAYWKQHLVTA</sequence>
<evidence type="ECO:0000255" key="1">
    <source>
        <dbReference type="HAMAP-Rule" id="MF_00006"/>
    </source>
</evidence>
<reference key="1">
    <citation type="submission" date="2006-12" db="EMBL/GenBank/DDBJ databases">
        <authorList>
            <person name="Hendrix L."/>
            <person name="Mohamoud Y."/>
            <person name="Radune D."/>
            <person name="Shvartsbeyn A."/>
            <person name="Daugherty S."/>
            <person name="Dodson R."/>
            <person name="Durkin A.S."/>
            <person name="Harkins D."/>
            <person name="Huot H."/>
            <person name="Kothari S.P."/>
            <person name="Madupu R."/>
            <person name="Li J."/>
            <person name="Nelson W.C."/>
            <person name="Shrivastava S."/>
            <person name="Giglio M.G."/>
            <person name="Haft D."/>
            <person name="Selengut J."/>
            <person name="Fraser-Ligget C."/>
            <person name="Seshadri R."/>
        </authorList>
    </citation>
    <scope>NUCLEOTIDE SEQUENCE [LARGE SCALE GENOMIC DNA]</scope>
    <source>
        <strain>ATCC 35685 / KC583 / Herrer 020/F12,63</strain>
    </source>
</reference>
<keyword id="KW-0028">Amino-acid biosynthesis</keyword>
<keyword id="KW-0055">Arginine biosynthesis</keyword>
<keyword id="KW-0963">Cytoplasm</keyword>
<keyword id="KW-0456">Lyase</keyword>
<feature type="chain" id="PRO_1000000452" description="Argininosuccinate lyase">
    <location>
        <begin position="1"/>
        <end position="466"/>
    </location>
</feature>
<dbReference type="EC" id="4.3.2.1" evidence="1"/>
<dbReference type="EMBL" id="CP000524">
    <property type="protein sequence ID" value="ABM45432.1"/>
    <property type="molecule type" value="Genomic_DNA"/>
</dbReference>
<dbReference type="RefSeq" id="WP_005765773.1">
    <property type="nucleotide sequence ID" value="NC_008783.1"/>
</dbReference>
<dbReference type="SMR" id="A1UQY9"/>
<dbReference type="STRING" id="360095.BARBAKC583_0054"/>
<dbReference type="GeneID" id="4684917"/>
<dbReference type="KEGG" id="bbk:BARBAKC583_0054"/>
<dbReference type="PATRIC" id="fig|360095.6.peg.53"/>
<dbReference type="eggNOG" id="COG0165">
    <property type="taxonomic scope" value="Bacteria"/>
</dbReference>
<dbReference type="HOGENOM" id="CLU_027272_2_3_5"/>
<dbReference type="OrthoDB" id="9769623at2"/>
<dbReference type="UniPathway" id="UPA00068">
    <property type="reaction ID" value="UER00114"/>
</dbReference>
<dbReference type="Proteomes" id="UP000000643">
    <property type="component" value="Chromosome"/>
</dbReference>
<dbReference type="GO" id="GO:0005829">
    <property type="term" value="C:cytosol"/>
    <property type="evidence" value="ECO:0007669"/>
    <property type="project" value="TreeGrafter"/>
</dbReference>
<dbReference type="GO" id="GO:0004056">
    <property type="term" value="F:argininosuccinate lyase activity"/>
    <property type="evidence" value="ECO:0007669"/>
    <property type="project" value="UniProtKB-UniRule"/>
</dbReference>
<dbReference type="GO" id="GO:0042450">
    <property type="term" value="P:arginine biosynthetic process via ornithine"/>
    <property type="evidence" value="ECO:0007669"/>
    <property type="project" value="InterPro"/>
</dbReference>
<dbReference type="GO" id="GO:0006526">
    <property type="term" value="P:L-arginine biosynthetic process"/>
    <property type="evidence" value="ECO:0007669"/>
    <property type="project" value="UniProtKB-UniRule"/>
</dbReference>
<dbReference type="CDD" id="cd01359">
    <property type="entry name" value="Argininosuccinate_lyase"/>
    <property type="match status" value="1"/>
</dbReference>
<dbReference type="FunFam" id="1.10.275.10:FF:000002">
    <property type="entry name" value="Argininosuccinate lyase"/>
    <property type="match status" value="1"/>
</dbReference>
<dbReference type="FunFam" id="1.10.40.30:FF:000001">
    <property type="entry name" value="Argininosuccinate lyase"/>
    <property type="match status" value="1"/>
</dbReference>
<dbReference type="FunFam" id="1.20.200.10:FF:000015">
    <property type="entry name" value="argininosuccinate lyase isoform X2"/>
    <property type="match status" value="1"/>
</dbReference>
<dbReference type="Gene3D" id="1.10.40.30">
    <property type="entry name" value="Fumarase/aspartase (C-terminal domain)"/>
    <property type="match status" value="1"/>
</dbReference>
<dbReference type="Gene3D" id="1.20.200.10">
    <property type="entry name" value="Fumarase/aspartase (Central domain)"/>
    <property type="match status" value="1"/>
</dbReference>
<dbReference type="Gene3D" id="1.10.275.10">
    <property type="entry name" value="Fumarase/aspartase (N-terminal domain)"/>
    <property type="match status" value="1"/>
</dbReference>
<dbReference type="HAMAP" id="MF_00006">
    <property type="entry name" value="Arg_succ_lyase"/>
    <property type="match status" value="1"/>
</dbReference>
<dbReference type="InterPro" id="IPR029419">
    <property type="entry name" value="Arg_succ_lyase_C"/>
</dbReference>
<dbReference type="InterPro" id="IPR009049">
    <property type="entry name" value="Argininosuccinate_lyase"/>
</dbReference>
<dbReference type="InterPro" id="IPR024083">
    <property type="entry name" value="Fumarase/histidase_N"/>
</dbReference>
<dbReference type="InterPro" id="IPR020557">
    <property type="entry name" value="Fumarate_lyase_CS"/>
</dbReference>
<dbReference type="InterPro" id="IPR000362">
    <property type="entry name" value="Fumarate_lyase_fam"/>
</dbReference>
<dbReference type="InterPro" id="IPR022761">
    <property type="entry name" value="Fumarate_lyase_N"/>
</dbReference>
<dbReference type="InterPro" id="IPR008948">
    <property type="entry name" value="L-Aspartase-like"/>
</dbReference>
<dbReference type="NCBIfam" id="TIGR00838">
    <property type="entry name" value="argH"/>
    <property type="match status" value="1"/>
</dbReference>
<dbReference type="PANTHER" id="PTHR43814">
    <property type="entry name" value="ARGININOSUCCINATE LYASE"/>
    <property type="match status" value="1"/>
</dbReference>
<dbReference type="PANTHER" id="PTHR43814:SF1">
    <property type="entry name" value="ARGININOSUCCINATE LYASE"/>
    <property type="match status" value="1"/>
</dbReference>
<dbReference type="Pfam" id="PF14698">
    <property type="entry name" value="ASL_C2"/>
    <property type="match status" value="1"/>
</dbReference>
<dbReference type="Pfam" id="PF00206">
    <property type="entry name" value="Lyase_1"/>
    <property type="match status" value="1"/>
</dbReference>
<dbReference type="PRINTS" id="PR00145">
    <property type="entry name" value="ARGSUCLYASE"/>
</dbReference>
<dbReference type="PRINTS" id="PR00149">
    <property type="entry name" value="FUMRATELYASE"/>
</dbReference>
<dbReference type="SUPFAM" id="SSF48557">
    <property type="entry name" value="L-aspartase-like"/>
    <property type="match status" value="1"/>
</dbReference>
<dbReference type="PROSITE" id="PS00163">
    <property type="entry name" value="FUMARATE_LYASES"/>
    <property type="match status" value="1"/>
</dbReference>
<organism>
    <name type="scientific">Bartonella bacilliformis (strain ATCC 35685 / KC583 / Herrer 020/F12,63)</name>
    <dbReference type="NCBI Taxonomy" id="360095"/>
    <lineage>
        <taxon>Bacteria</taxon>
        <taxon>Pseudomonadati</taxon>
        <taxon>Pseudomonadota</taxon>
        <taxon>Alphaproteobacteria</taxon>
        <taxon>Hyphomicrobiales</taxon>
        <taxon>Bartonellaceae</taxon>
        <taxon>Bartonella</taxon>
    </lineage>
</organism>
<proteinExistence type="inferred from homology"/>
<gene>
    <name evidence="1" type="primary">argH</name>
    <name type="ordered locus">BARBAKC583_0054</name>
</gene>